<sequence length="432" mass="47314">MARIGDGGDLLKCSFCGKSQKQVKKLIAGPGVYICDECIDLCNEIIEEELAETSEVRWEELPKPREIYEFLEGYVVGQEPAKKALSVAVYNHYKRVQAGENGGGAGREDAIELAKSNILLLGPTGSGKTLLAQTLARMLNVPFAIADATALTEAGYVGEDVENILLKLIQAADYDVKKAETGIIYIDEIDKVARKSENPSITRDVSGEGVQQALLKILEGTTASVPPQGGRKHPHQEFIQIDTTNVLFIVGGAFSGLEKIIESRAGAKGIGFGATIRSKLEIQASDQFQEVMPEDLVKFGMIPEFIGRLPVLTSVHNLDREALLQILIEPRNALVKQYQRLFELDGVELDFEREALEAIADQAILRQTGARGLRAIMEEVLQSVMYEVPSRKDVARVVITPDVVRNNVNPTLVPREPRTIGKNDGGRHEKSA</sequence>
<evidence type="ECO:0000255" key="1">
    <source>
        <dbReference type="HAMAP-Rule" id="MF_00175"/>
    </source>
</evidence>
<evidence type="ECO:0000255" key="2">
    <source>
        <dbReference type="PROSITE-ProRule" id="PRU01250"/>
    </source>
</evidence>
<evidence type="ECO:0000256" key="3">
    <source>
        <dbReference type="SAM" id="MobiDB-lite"/>
    </source>
</evidence>
<proteinExistence type="inferred from homology"/>
<protein>
    <recommendedName>
        <fullName evidence="1">ATP-dependent Clp protease ATP-binding subunit ClpX</fullName>
    </recommendedName>
</protein>
<accession>B1VXA8</accession>
<feature type="chain" id="PRO_1000098004" description="ATP-dependent Clp protease ATP-binding subunit ClpX">
    <location>
        <begin position="1"/>
        <end position="432"/>
    </location>
</feature>
<feature type="domain" description="ClpX-type ZB" evidence="2">
    <location>
        <begin position="1"/>
        <end position="54"/>
    </location>
</feature>
<feature type="region of interest" description="Disordered" evidence="3">
    <location>
        <begin position="411"/>
        <end position="432"/>
    </location>
</feature>
<feature type="compositionally biased region" description="Basic and acidic residues" evidence="3">
    <location>
        <begin position="415"/>
        <end position="432"/>
    </location>
</feature>
<feature type="binding site" evidence="2">
    <location>
        <position position="13"/>
    </location>
    <ligand>
        <name>Zn(2+)</name>
        <dbReference type="ChEBI" id="CHEBI:29105"/>
    </ligand>
</feature>
<feature type="binding site" evidence="2">
    <location>
        <position position="16"/>
    </location>
    <ligand>
        <name>Zn(2+)</name>
        <dbReference type="ChEBI" id="CHEBI:29105"/>
    </ligand>
</feature>
<feature type="binding site" evidence="2">
    <location>
        <position position="35"/>
    </location>
    <ligand>
        <name>Zn(2+)</name>
        <dbReference type="ChEBI" id="CHEBI:29105"/>
    </ligand>
</feature>
<feature type="binding site" evidence="2">
    <location>
        <position position="38"/>
    </location>
    <ligand>
        <name>Zn(2+)</name>
        <dbReference type="ChEBI" id="CHEBI:29105"/>
    </ligand>
</feature>
<feature type="binding site" evidence="1">
    <location>
        <begin position="123"/>
        <end position="130"/>
    </location>
    <ligand>
        <name>ATP</name>
        <dbReference type="ChEBI" id="CHEBI:30616"/>
    </ligand>
</feature>
<dbReference type="EMBL" id="AP009493">
    <property type="protein sequence ID" value="BAG21754.1"/>
    <property type="molecule type" value="Genomic_DNA"/>
</dbReference>
<dbReference type="RefSeq" id="WP_003969179.1">
    <property type="nucleotide sequence ID" value="NC_010572.1"/>
</dbReference>
<dbReference type="SMR" id="B1VXA8"/>
<dbReference type="GeneID" id="95481298"/>
<dbReference type="KEGG" id="sgr:SGR_4925"/>
<dbReference type="eggNOG" id="COG1219">
    <property type="taxonomic scope" value="Bacteria"/>
</dbReference>
<dbReference type="HOGENOM" id="CLU_014218_8_2_11"/>
<dbReference type="Proteomes" id="UP000001685">
    <property type="component" value="Chromosome"/>
</dbReference>
<dbReference type="GO" id="GO:0009376">
    <property type="term" value="C:HslUV protease complex"/>
    <property type="evidence" value="ECO:0007669"/>
    <property type="project" value="TreeGrafter"/>
</dbReference>
<dbReference type="GO" id="GO:0005524">
    <property type="term" value="F:ATP binding"/>
    <property type="evidence" value="ECO:0007669"/>
    <property type="project" value="UniProtKB-UniRule"/>
</dbReference>
<dbReference type="GO" id="GO:0016887">
    <property type="term" value="F:ATP hydrolysis activity"/>
    <property type="evidence" value="ECO:0007669"/>
    <property type="project" value="InterPro"/>
</dbReference>
<dbReference type="GO" id="GO:0140662">
    <property type="term" value="F:ATP-dependent protein folding chaperone"/>
    <property type="evidence" value="ECO:0007669"/>
    <property type="project" value="InterPro"/>
</dbReference>
<dbReference type="GO" id="GO:0046983">
    <property type="term" value="F:protein dimerization activity"/>
    <property type="evidence" value="ECO:0007669"/>
    <property type="project" value="InterPro"/>
</dbReference>
<dbReference type="GO" id="GO:0051082">
    <property type="term" value="F:unfolded protein binding"/>
    <property type="evidence" value="ECO:0007669"/>
    <property type="project" value="UniProtKB-UniRule"/>
</dbReference>
<dbReference type="GO" id="GO:0008270">
    <property type="term" value="F:zinc ion binding"/>
    <property type="evidence" value="ECO:0007669"/>
    <property type="project" value="InterPro"/>
</dbReference>
<dbReference type="GO" id="GO:0051301">
    <property type="term" value="P:cell division"/>
    <property type="evidence" value="ECO:0007669"/>
    <property type="project" value="TreeGrafter"/>
</dbReference>
<dbReference type="GO" id="GO:0051603">
    <property type="term" value="P:proteolysis involved in protein catabolic process"/>
    <property type="evidence" value="ECO:0007669"/>
    <property type="project" value="TreeGrafter"/>
</dbReference>
<dbReference type="CDD" id="cd19497">
    <property type="entry name" value="RecA-like_ClpX"/>
    <property type="match status" value="1"/>
</dbReference>
<dbReference type="FunFam" id="1.10.8.60:FF:000002">
    <property type="entry name" value="ATP-dependent Clp protease ATP-binding subunit ClpX"/>
    <property type="match status" value="1"/>
</dbReference>
<dbReference type="FunFam" id="3.40.50.300:FF:000005">
    <property type="entry name" value="ATP-dependent Clp protease ATP-binding subunit ClpX"/>
    <property type="match status" value="1"/>
</dbReference>
<dbReference type="Gene3D" id="1.10.8.60">
    <property type="match status" value="1"/>
</dbReference>
<dbReference type="Gene3D" id="6.20.220.10">
    <property type="entry name" value="ClpX chaperone, C4-type zinc finger domain"/>
    <property type="match status" value="1"/>
</dbReference>
<dbReference type="Gene3D" id="3.40.50.300">
    <property type="entry name" value="P-loop containing nucleotide triphosphate hydrolases"/>
    <property type="match status" value="1"/>
</dbReference>
<dbReference type="HAMAP" id="MF_00175">
    <property type="entry name" value="ClpX"/>
    <property type="match status" value="1"/>
</dbReference>
<dbReference type="InterPro" id="IPR003593">
    <property type="entry name" value="AAA+_ATPase"/>
</dbReference>
<dbReference type="InterPro" id="IPR050052">
    <property type="entry name" value="ATP-dep_Clp_protease_ClpX"/>
</dbReference>
<dbReference type="InterPro" id="IPR003959">
    <property type="entry name" value="ATPase_AAA_core"/>
</dbReference>
<dbReference type="InterPro" id="IPR019489">
    <property type="entry name" value="Clp_ATPase_C"/>
</dbReference>
<dbReference type="InterPro" id="IPR004487">
    <property type="entry name" value="Clp_protease_ATP-bd_su_ClpX"/>
</dbReference>
<dbReference type="InterPro" id="IPR046425">
    <property type="entry name" value="ClpX_bact"/>
</dbReference>
<dbReference type="InterPro" id="IPR027417">
    <property type="entry name" value="P-loop_NTPase"/>
</dbReference>
<dbReference type="InterPro" id="IPR010603">
    <property type="entry name" value="Znf_CppX_C4"/>
</dbReference>
<dbReference type="InterPro" id="IPR038366">
    <property type="entry name" value="Znf_CppX_C4_sf"/>
</dbReference>
<dbReference type="NCBIfam" id="TIGR00382">
    <property type="entry name" value="clpX"/>
    <property type="match status" value="1"/>
</dbReference>
<dbReference type="NCBIfam" id="NF003745">
    <property type="entry name" value="PRK05342.1"/>
    <property type="match status" value="1"/>
</dbReference>
<dbReference type="PANTHER" id="PTHR48102:SF7">
    <property type="entry name" value="ATP-DEPENDENT CLP PROTEASE ATP-BINDING SUBUNIT CLPX-LIKE, MITOCHONDRIAL"/>
    <property type="match status" value="1"/>
</dbReference>
<dbReference type="PANTHER" id="PTHR48102">
    <property type="entry name" value="ATP-DEPENDENT CLP PROTEASE ATP-BINDING SUBUNIT CLPX-LIKE, MITOCHONDRIAL-RELATED"/>
    <property type="match status" value="1"/>
</dbReference>
<dbReference type="Pfam" id="PF07724">
    <property type="entry name" value="AAA_2"/>
    <property type="match status" value="1"/>
</dbReference>
<dbReference type="Pfam" id="PF10431">
    <property type="entry name" value="ClpB_D2-small"/>
    <property type="match status" value="1"/>
</dbReference>
<dbReference type="Pfam" id="PF06689">
    <property type="entry name" value="zf-C4_ClpX"/>
    <property type="match status" value="1"/>
</dbReference>
<dbReference type="SMART" id="SM00382">
    <property type="entry name" value="AAA"/>
    <property type="match status" value="1"/>
</dbReference>
<dbReference type="SMART" id="SM01086">
    <property type="entry name" value="ClpB_D2-small"/>
    <property type="match status" value="1"/>
</dbReference>
<dbReference type="SMART" id="SM00994">
    <property type="entry name" value="zf-C4_ClpX"/>
    <property type="match status" value="1"/>
</dbReference>
<dbReference type="SUPFAM" id="SSF57716">
    <property type="entry name" value="Glucocorticoid receptor-like (DNA-binding domain)"/>
    <property type="match status" value="1"/>
</dbReference>
<dbReference type="SUPFAM" id="SSF52540">
    <property type="entry name" value="P-loop containing nucleoside triphosphate hydrolases"/>
    <property type="match status" value="1"/>
</dbReference>
<dbReference type="PROSITE" id="PS51902">
    <property type="entry name" value="CLPX_ZB"/>
    <property type="match status" value="1"/>
</dbReference>
<gene>
    <name evidence="1" type="primary">clpX</name>
    <name type="ordered locus">SGR_4925</name>
</gene>
<comment type="function">
    <text evidence="1">ATP-dependent specificity component of the Clp protease. It directs the protease to specific substrates. Can perform chaperone functions in the absence of ClpP.</text>
</comment>
<comment type="subunit">
    <text evidence="1">Component of the ClpX-ClpP complex. Forms a hexameric ring that, in the presence of ATP, binds to fourteen ClpP subunits assembled into a disk-like structure with a central cavity, resembling the structure of eukaryotic proteasomes.</text>
</comment>
<comment type="similarity">
    <text evidence="1">Belongs to the ClpX chaperone family.</text>
</comment>
<keyword id="KW-0067">ATP-binding</keyword>
<keyword id="KW-0143">Chaperone</keyword>
<keyword id="KW-0479">Metal-binding</keyword>
<keyword id="KW-0547">Nucleotide-binding</keyword>
<keyword id="KW-0862">Zinc</keyword>
<organism>
    <name type="scientific">Streptomyces griseus subsp. griseus (strain JCM 4626 / CBS 651.72 / NBRC 13350 / KCC S-0626 / ISP 5235)</name>
    <dbReference type="NCBI Taxonomy" id="455632"/>
    <lineage>
        <taxon>Bacteria</taxon>
        <taxon>Bacillati</taxon>
        <taxon>Actinomycetota</taxon>
        <taxon>Actinomycetes</taxon>
        <taxon>Kitasatosporales</taxon>
        <taxon>Streptomycetaceae</taxon>
        <taxon>Streptomyces</taxon>
    </lineage>
</organism>
<reference key="1">
    <citation type="journal article" date="2008" name="J. Bacteriol.">
        <title>Genome sequence of the streptomycin-producing microorganism Streptomyces griseus IFO 13350.</title>
        <authorList>
            <person name="Ohnishi Y."/>
            <person name="Ishikawa J."/>
            <person name="Hara H."/>
            <person name="Suzuki H."/>
            <person name="Ikenoya M."/>
            <person name="Ikeda H."/>
            <person name="Yamashita A."/>
            <person name="Hattori M."/>
            <person name="Horinouchi S."/>
        </authorList>
    </citation>
    <scope>NUCLEOTIDE SEQUENCE [LARGE SCALE GENOMIC DNA]</scope>
    <source>
        <strain>JCM 4626 / CBS 651.72 / NBRC 13350 / KCC S-0626 / ISP 5235</strain>
    </source>
</reference>
<name>CLPX_STRGG</name>